<reference key="1">
    <citation type="journal article" date="1997" name="DNA Res.">
        <title>Structural analysis of Arabidopsis thaliana chromosome 5. I. Sequence features of the 1.6 Mb regions covered by twenty physically assigned P1 clones.</title>
        <authorList>
            <person name="Sato S."/>
            <person name="Kotani H."/>
            <person name="Nakamura Y."/>
            <person name="Kaneko T."/>
            <person name="Asamizu E."/>
            <person name="Fukami M."/>
            <person name="Miyajima N."/>
            <person name="Tabata S."/>
        </authorList>
    </citation>
    <scope>NUCLEOTIDE SEQUENCE [LARGE SCALE GENOMIC DNA]</scope>
    <source>
        <strain>cv. Columbia</strain>
    </source>
</reference>
<reference key="2">
    <citation type="journal article" date="2017" name="Plant J.">
        <title>Araport11: a complete reannotation of the Arabidopsis thaliana reference genome.</title>
        <authorList>
            <person name="Cheng C.Y."/>
            <person name="Krishnakumar V."/>
            <person name="Chan A.P."/>
            <person name="Thibaud-Nissen F."/>
            <person name="Schobel S."/>
            <person name="Town C.D."/>
        </authorList>
    </citation>
    <scope>GENOME REANNOTATION</scope>
    <source>
        <strain>cv. Columbia</strain>
    </source>
</reference>
<reference key="3">
    <citation type="journal article" date="2003" name="Science">
        <title>Empirical analysis of transcriptional activity in the Arabidopsis genome.</title>
        <authorList>
            <person name="Yamada K."/>
            <person name="Lim J."/>
            <person name="Dale J.M."/>
            <person name="Chen H."/>
            <person name="Shinn P."/>
            <person name="Palm C.J."/>
            <person name="Southwick A.M."/>
            <person name="Wu H.C."/>
            <person name="Kim C.J."/>
            <person name="Nguyen M."/>
            <person name="Pham P.K."/>
            <person name="Cheuk R.F."/>
            <person name="Karlin-Newmann G."/>
            <person name="Liu S.X."/>
            <person name="Lam B."/>
            <person name="Sakano H."/>
            <person name="Wu T."/>
            <person name="Yu G."/>
            <person name="Miranda M."/>
            <person name="Quach H.L."/>
            <person name="Tripp M."/>
            <person name="Chang C.H."/>
            <person name="Lee J.M."/>
            <person name="Toriumi M.J."/>
            <person name="Chan M.M."/>
            <person name="Tang C.C."/>
            <person name="Onodera C.S."/>
            <person name="Deng J.M."/>
            <person name="Akiyama K."/>
            <person name="Ansari Y."/>
            <person name="Arakawa T."/>
            <person name="Banh J."/>
            <person name="Banno F."/>
            <person name="Bowser L."/>
            <person name="Brooks S.Y."/>
            <person name="Carninci P."/>
            <person name="Chao Q."/>
            <person name="Choy N."/>
            <person name="Enju A."/>
            <person name="Goldsmith A.D."/>
            <person name="Gurjal M."/>
            <person name="Hansen N.F."/>
            <person name="Hayashizaki Y."/>
            <person name="Johnson-Hopson C."/>
            <person name="Hsuan V.W."/>
            <person name="Iida K."/>
            <person name="Karnes M."/>
            <person name="Khan S."/>
            <person name="Koesema E."/>
            <person name="Ishida J."/>
            <person name="Jiang P.X."/>
            <person name="Jones T."/>
            <person name="Kawai J."/>
            <person name="Kamiya A."/>
            <person name="Meyers C."/>
            <person name="Nakajima M."/>
            <person name="Narusaka M."/>
            <person name="Seki M."/>
            <person name="Sakurai T."/>
            <person name="Satou M."/>
            <person name="Tamse R."/>
            <person name="Vaysberg M."/>
            <person name="Wallender E.K."/>
            <person name="Wong C."/>
            <person name="Yamamura Y."/>
            <person name="Yuan S."/>
            <person name="Shinozaki K."/>
            <person name="Davis R.W."/>
            <person name="Theologis A."/>
            <person name="Ecker J.R."/>
        </authorList>
    </citation>
    <scope>NUCLEOTIDE SEQUENCE [LARGE SCALE MRNA] OF 12-368</scope>
    <source>
        <strain>cv. Columbia</strain>
    </source>
</reference>
<reference key="4">
    <citation type="submission" date="2004-07" db="EMBL/GenBank/DDBJ databases">
        <title>Arabidopsis ORF clones.</title>
        <authorList>
            <person name="Cheuk R.F."/>
            <person name="Chen H."/>
            <person name="Kim C.J."/>
            <person name="Shinn P."/>
            <person name="Ecker J.R."/>
        </authorList>
    </citation>
    <scope>NUCLEOTIDE SEQUENCE [LARGE SCALE MRNA] OF 126-368</scope>
    <source>
        <strain>cv. Columbia</strain>
    </source>
</reference>
<reference key="5">
    <citation type="journal article" date="2010" name="Proc. Natl. Acad. Sci. U.S.A.">
        <title>Negative feedback regulation of UV-B-induced photomorphogenesis and stress acclimation in Arabidopsis.</title>
        <authorList>
            <person name="Gruber H."/>
            <person name="Heijde M."/>
            <person name="Heller W."/>
            <person name="Albert A."/>
            <person name="Seidlitz H.K."/>
            <person name="Ulm R."/>
        </authorList>
    </citation>
    <scope>FUNCTION</scope>
    <scope>INTERACTION WITH UVR8</scope>
    <scope>SUBCELLULAR LOCATION</scope>
    <scope>INDUCTION BY UV-B</scope>
    <source>
        <strain>cv. Columbia</strain>
    </source>
</reference>
<reference key="6">
    <citation type="journal article" date="2011" name="J. Exp. Bot.">
        <title>EFO1 and EFO2, encoding putative WD-domain proteins, have overlapping and distinct roles in the regulation of vegetative development and flowering of Arabidopsis.</title>
        <authorList>
            <person name="Wang W."/>
            <person name="Yang D."/>
            <person name="Feldmann K.A."/>
        </authorList>
    </citation>
    <scope>FUNCTION</scope>
    <scope>INDUCTION</scope>
    <scope>DISRUPTION PHENOTYPE</scope>
    <source>
        <strain>cv. Wassilewskija</strain>
    </source>
</reference>
<reference key="7">
    <citation type="journal article" date="2012" name="Proc. Natl. Acad. Sci. U.S.A.">
        <title>C-terminal region of the UV-B photoreceptor UVR8 initiates signaling through interaction with the COP1 protein.</title>
        <authorList>
            <person name="Cloix C."/>
            <person name="Kaiserli E."/>
            <person name="Heilmann M."/>
            <person name="Baxter K.J."/>
            <person name="Brown B.A."/>
            <person name="O'Hara A."/>
            <person name="Smith B.O."/>
            <person name="Christie J.M."/>
            <person name="Jenkins G.I."/>
        </authorList>
    </citation>
    <scope>INTERACTION WITH UVR8</scope>
</reference>
<organism>
    <name type="scientific">Arabidopsis thaliana</name>
    <name type="common">Mouse-ear cress</name>
    <dbReference type="NCBI Taxonomy" id="3702"/>
    <lineage>
        <taxon>Eukaryota</taxon>
        <taxon>Viridiplantae</taxon>
        <taxon>Streptophyta</taxon>
        <taxon>Embryophyta</taxon>
        <taxon>Tracheophyta</taxon>
        <taxon>Spermatophyta</taxon>
        <taxon>Magnoliopsida</taxon>
        <taxon>eudicotyledons</taxon>
        <taxon>Gunneridae</taxon>
        <taxon>Pentapetalae</taxon>
        <taxon>rosids</taxon>
        <taxon>malvids</taxon>
        <taxon>Brassicales</taxon>
        <taxon>Brassicaceae</taxon>
        <taxon>Camelineae</taxon>
        <taxon>Arabidopsis</taxon>
    </lineage>
</organism>
<dbReference type="EMBL" id="AB005244">
    <property type="protein sequence ID" value="BAB10046.1"/>
    <property type="molecule type" value="Genomic_DNA"/>
</dbReference>
<dbReference type="EMBL" id="CP002688">
    <property type="protein sequence ID" value="AED93205.1"/>
    <property type="molecule type" value="Genomic_DNA"/>
</dbReference>
<dbReference type="EMBL" id="AY039941">
    <property type="protein sequence ID" value="AAK64045.1"/>
    <property type="status" value="ALT_INIT"/>
    <property type="molecule type" value="mRNA"/>
</dbReference>
<dbReference type="EMBL" id="BT015119">
    <property type="protein sequence ID" value="AAT71991.1"/>
    <property type="molecule type" value="mRNA"/>
</dbReference>
<dbReference type="RefSeq" id="NP_568435.2">
    <property type="nucleotide sequence ID" value="NM_122278.4"/>
</dbReference>
<dbReference type="PDB" id="8GQE">
    <property type="method" value="X-ray"/>
    <property type="resolution" value="2.00 A"/>
    <property type="chains" value="A=20-366"/>
</dbReference>
<dbReference type="PDBsum" id="8GQE"/>
<dbReference type="SMR" id="Q9FFA7"/>
<dbReference type="BioGRID" id="17713">
    <property type="interactions" value="1"/>
</dbReference>
<dbReference type="DIP" id="DIP-60745N"/>
<dbReference type="FunCoup" id="Q9FFA7">
    <property type="interactions" value="179"/>
</dbReference>
<dbReference type="IntAct" id="Q9FFA7">
    <property type="interactions" value="1"/>
</dbReference>
<dbReference type="STRING" id="3702.Q9FFA7"/>
<dbReference type="iPTMnet" id="Q9FFA7"/>
<dbReference type="PaxDb" id="3702-AT5G23730.1"/>
<dbReference type="ProteomicsDB" id="226658"/>
<dbReference type="EnsemblPlants" id="AT5G23730.1">
    <property type="protein sequence ID" value="AT5G23730.1"/>
    <property type="gene ID" value="AT5G23730"/>
</dbReference>
<dbReference type="GeneID" id="832438"/>
<dbReference type="Gramene" id="AT5G23730.1">
    <property type="protein sequence ID" value="AT5G23730.1"/>
    <property type="gene ID" value="AT5G23730"/>
</dbReference>
<dbReference type="KEGG" id="ath:AT5G23730"/>
<dbReference type="Araport" id="AT5G23730"/>
<dbReference type="TAIR" id="AT5G23730">
    <property type="gene designation" value="RUP2"/>
</dbReference>
<dbReference type="eggNOG" id="ENOG502QVDX">
    <property type="taxonomic scope" value="Eukaryota"/>
</dbReference>
<dbReference type="HOGENOM" id="CLU_006994_0_2_1"/>
<dbReference type="InParanoid" id="Q9FFA7"/>
<dbReference type="OMA" id="RVWSMDY"/>
<dbReference type="PhylomeDB" id="Q9FFA7"/>
<dbReference type="PRO" id="PR:Q9FFA7"/>
<dbReference type="Proteomes" id="UP000006548">
    <property type="component" value="Chromosome 5"/>
</dbReference>
<dbReference type="ExpressionAtlas" id="Q9FFA7">
    <property type="expression patterns" value="baseline and differential"/>
</dbReference>
<dbReference type="GO" id="GO:0080008">
    <property type="term" value="C:Cul4-RING E3 ubiquitin ligase complex"/>
    <property type="evidence" value="ECO:0000250"/>
    <property type="project" value="TAIR"/>
</dbReference>
<dbReference type="GO" id="GO:0005829">
    <property type="term" value="C:cytosol"/>
    <property type="evidence" value="ECO:0007669"/>
    <property type="project" value="UniProtKB-SubCell"/>
</dbReference>
<dbReference type="GO" id="GO:0005634">
    <property type="term" value="C:nucleus"/>
    <property type="evidence" value="ECO:0007669"/>
    <property type="project" value="UniProtKB-SubCell"/>
</dbReference>
<dbReference type="GO" id="GO:0009658">
    <property type="term" value="P:chloroplast organization"/>
    <property type="evidence" value="ECO:0000315"/>
    <property type="project" value="TAIR"/>
</dbReference>
<dbReference type="GO" id="GO:0009908">
    <property type="term" value="P:flower development"/>
    <property type="evidence" value="ECO:0007669"/>
    <property type="project" value="UniProtKB-KW"/>
</dbReference>
<dbReference type="GO" id="GO:0043254">
    <property type="term" value="P:regulation of protein-containing complex assembly"/>
    <property type="evidence" value="ECO:0000314"/>
    <property type="project" value="TAIR"/>
</dbReference>
<dbReference type="GO" id="GO:0010224">
    <property type="term" value="P:response to UV-B"/>
    <property type="evidence" value="ECO:0000316"/>
    <property type="project" value="TAIR"/>
</dbReference>
<dbReference type="FunFam" id="2.130.10.10:FF:000853">
    <property type="entry name" value="WD repeat-containing protein RUP2"/>
    <property type="match status" value="1"/>
</dbReference>
<dbReference type="Gene3D" id="2.130.10.10">
    <property type="entry name" value="YVTN repeat-like/Quinoprotein amine dehydrogenase"/>
    <property type="match status" value="1"/>
</dbReference>
<dbReference type="InterPro" id="IPR044616">
    <property type="entry name" value="RUP1/2"/>
</dbReference>
<dbReference type="InterPro" id="IPR015943">
    <property type="entry name" value="WD40/YVTN_repeat-like_dom_sf"/>
</dbReference>
<dbReference type="InterPro" id="IPR036322">
    <property type="entry name" value="WD40_repeat_dom_sf"/>
</dbReference>
<dbReference type="InterPro" id="IPR001680">
    <property type="entry name" value="WD40_rpt"/>
</dbReference>
<dbReference type="PANTHER" id="PTHR45389">
    <property type="entry name" value="WD REPEAT-CONTAINING PROTEIN RUP1"/>
    <property type="match status" value="1"/>
</dbReference>
<dbReference type="PANTHER" id="PTHR45389:SF3">
    <property type="entry name" value="WD REPEAT-CONTAINING PROTEIN RUP2"/>
    <property type="match status" value="1"/>
</dbReference>
<dbReference type="Pfam" id="PF00400">
    <property type="entry name" value="WD40"/>
    <property type="match status" value="2"/>
</dbReference>
<dbReference type="SMART" id="SM00320">
    <property type="entry name" value="WD40"/>
    <property type="match status" value="7"/>
</dbReference>
<dbReference type="SUPFAM" id="SSF50978">
    <property type="entry name" value="WD40 repeat-like"/>
    <property type="match status" value="1"/>
</dbReference>
<dbReference type="PROSITE" id="PS50082">
    <property type="entry name" value="WD_REPEATS_2"/>
    <property type="match status" value="1"/>
</dbReference>
<dbReference type="PROSITE" id="PS50294">
    <property type="entry name" value="WD_REPEATS_REGION"/>
    <property type="match status" value="1"/>
</dbReference>
<name>RUP2_ARATH</name>
<protein>
    <recommendedName>
        <fullName>WD repeat-containing protein RUP2</fullName>
    </recommendedName>
    <alternativeName>
        <fullName>Protein EARLY FLOWERING BY OVEREXPRESSION 2</fullName>
    </alternativeName>
    <alternativeName>
        <fullName>Protein REPRESSOR OF UV-B PHOTOMORPHOGENESIS 2</fullName>
    </alternativeName>
</protein>
<sequence>MNTLHPHKQQQEQAQQQEEARYEWDLSLSTVVSSSSSSASDVIGAIEFDPTDNIVATAGISRKIRFYGLPSLLRNNAVSGTGVSFVDQATACEYYICTPAKLSSLRWRPGSGGRVIGSGDYDGVVMEYDLEKRTPVFERDEHGGRRVWSVDYTRHGGASTVGASGSDDGTMQVWDPRCPPEESVGVVRPAGICRSAVCCVEFDPSGGPAVAVGCADRKGYVYDIRKLVDPALTLQGHTKTVSYVRFLDGGTVVTAGTDGCLKLWSVEDGRVIRTYEGHVNNRNFVGLSVWRNGALFGCGSENNRVFVYDRRWGKPVWVDGFEPVGMNSGSDKRFVSSVCWRQSGVDQCTLVAGGSDGVLQVYVGKRKP</sequence>
<feature type="chain" id="PRO_0000421721" description="WD repeat-containing protein RUP2">
    <location>
        <begin position="1"/>
        <end position="368"/>
    </location>
</feature>
<feature type="repeat" description="WD 1">
    <location>
        <begin position="38"/>
        <end position="77"/>
    </location>
</feature>
<feature type="repeat" description="WD 2">
    <location>
        <begin position="97"/>
        <end position="138"/>
    </location>
</feature>
<feature type="repeat" description="WD 3">
    <location>
        <begin position="141"/>
        <end position="184"/>
    </location>
</feature>
<feature type="repeat" description="WD 4">
    <location>
        <begin position="192"/>
        <end position="232"/>
    </location>
</feature>
<feature type="repeat" description="WD 5">
    <location>
        <begin position="236"/>
        <end position="276"/>
    </location>
</feature>
<feature type="repeat" description="WD 6">
    <location>
        <begin position="279"/>
        <end position="318"/>
    </location>
</feature>
<feature type="repeat" description="WD 7">
    <location>
        <begin position="330"/>
        <end position="368"/>
    </location>
</feature>
<feature type="strand" evidence="5">
    <location>
        <begin position="24"/>
        <end position="33"/>
    </location>
</feature>
<feature type="strand" evidence="5">
    <location>
        <begin position="43"/>
        <end position="48"/>
    </location>
</feature>
<feature type="strand" evidence="5">
    <location>
        <begin position="52"/>
        <end position="59"/>
    </location>
</feature>
<feature type="strand" evidence="5">
    <location>
        <begin position="62"/>
        <end position="68"/>
    </location>
</feature>
<feature type="helix" evidence="5">
    <location>
        <begin position="69"/>
        <end position="75"/>
    </location>
</feature>
<feature type="strand" evidence="5">
    <location>
        <begin position="84"/>
        <end position="87"/>
    </location>
</feature>
<feature type="helix" evidence="5">
    <location>
        <begin position="88"/>
        <end position="91"/>
    </location>
</feature>
<feature type="strand" evidence="5">
    <location>
        <begin position="94"/>
        <end position="97"/>
    </location>
</feature>
<feature type="strand" evidence="5">
    <location>
        <begin position="102"/>
        <end position="107"/>
    </location>
</feature>
<feature type="strand" evidence="5">
    <location>
        <begin position="115"/>
        <end position="120"/>
    </location>
</feature>
<feature type="strand" evidence="5">
    <location>
        <begin position="125"/>
        <end position="129"/>
    </location>
</feature>
<feature type="turn" evidence="5">
    <location>
        <begin position="130"/>
        <end position="133"/>
    </location>
</feature>
<feature type="strand" evidence="5">
    <location>
        <begin position="134"/>
        <end position="139"/>
    </location>
</feature>
<feature type="strand" evidence="5">
    <location>
        <begin position="147"/>
        <end position="152"/>
    </location>
</feature>
<feature type="helix" evidence="5">
    <location>
        <begin position="157"/>
        <end position="159"/>
    </location>
</feature>
<feature type="strand" evidence="5">
    <location>
        <begin position="162"/>
        <end position="166"/>
    </location>
</feature>
<feature type="strand" evidence="5">
    <location>
        <begin position="171"/>
        <end position="174"/>
    </location>
</feature>
<feature type="strand" evidence="5">
    <location>
        <begin position="184"/>
        <end position="187"/>
    </location>
</feature>
<feature type="strand" evidence="5">
    <location>
        <begin position="197"/>
        <end position="202"/>
    </location>
</feature>
<feature type="strand" evidence="5">
    <location>
        <begin position="208"/>
        <end position="214"/>
    </location>
</feature>
<feature type="strand" evidence="5">
    <location>
        <begin position="219"/>
        <end position="223"/>
    </location>
</feature>
<feature type="strand" evidence="5">
    <location>
        <begin position="232"/>
        <end position="234"/>
    </location>
</feature>
<feature type="strand" evidence="5">
    <location>
        <begin position="241"/>
        <end position="248"/>
    </location>
</feature>
<feature type="strand" evidence="5">
    <location>
        <begin position="251"/>
        <end position="256"/>
    </location>
</feature>
<feature type="turn" evidence="5">
    <location>
        <begin position="257"/>
        <end position="259"/>
    </location>
</feature>
<feature type="strand" evidence="5">
    <location>
        <begin position="260"/>
        <end position="265"/>
    </location>
</feature>
<feature type="turn" evidence="5">
    <location>
        <begin position="266"/>
        <end position="268"/>
    </location>
</feature>
<feature type="strand" evidence="5">
    <location>
        <begin position="271"/>
        <end position="276"/>
    </location>
</feature>
<feature type="strand" evidence="5">
    <location>
        <begin position="281"/>
        <end position="283"/>
    </location>
</feature>
<feature type="strand" evidence="5">
    <location>
        <begin position="287"/>
        <end position="290"/>
    </location>
</feature>
<feature type="turn" evidence="5">
    <location>
        <begin position="291"/>
        <end position="294"/>
    </location>
</feature>
<feature type="strand" evidence="5">
    <location>
        <begin position="295"/>
        <end position="298"/>
    </location>
</feature>
<feature type="strand" evidence="5">
    <location>
        <begin position="305"/>
        <end position="309"/>
    </location>
</feature>
<feature type="strand" evidence="5">
    <location>
        <begin position="316"/>
        <end position="319"/>
    </location>
</feature>
<feature type="strand" evidence="5">
    <location>
        <begin position="335"/>
        <end position="340"/>
    </location>
</feature>
<feature type="strand" evidence="5">
    <location>
        <begin position="345"/>
        <end position="354"/>
    </location>
</feature>
<feature type="strand" evidence="5">
    <location>
        <begin position="359"/>
        <end position="366"/>
    </location>
</feature>
<accession>Q9FFA7</accession>
<accession>Q94BR3</accession>
<evidence type="ECO:0000269" key="1">
    <source>
    </source>
</evidence>
<evidence type="ECO:0000269" key="2">
    <source>
    </source>
</evidence>
<evidence type="ECO:0000269" key="3">
    <source>
    </source>
</evidence>
<evidence type="ECO:0000305" key="4"/>
<evidence type="ECO:0007829" key="5">
    <source>
        <dbReference type="PDB" id="8GQE"/>
    </source>
</evidence>
<gene>
    <name type="primary">RUP2</name>
    <name type="synonym">EFO2</name>
    <name type="ordered locus">At5g23730</name>
    <name type="ORF">MRO11.23</name>
</gene>
<keyword id="KW-0002">3D-structure</keyword>
<keyword id="KW-0963">Cytoplasm</keyword>
<keyword id="KW-0287">Flowering</keyword>
<keyword id="KW-0539">Nucleus</keyword>
<keyword id="KW-1185">Reference proteome</keyword>
<keyword id="KW-0677">Repeat</keyword>
<keyword id="KW-0853">WD repeat</keyword>
<proteinExistence type="evidence at protein level"/>
<comment type="function">
    <text evidence="1 2">Functions in association with RUP1 as repressor of UV-B-induced photomorphogenesis mediated by UVR8 and HY5. Plays a crucial negative feedback regulatory role downstream of UVR8-COP1 to inhibit UVR8 function, balance UV-B-specific responses and ensure normal plant growth. Is involved in the regulation of photoperiodic flowering and vegetative development. May act as negative regulator of photoperiodic flowering by suppressing flowering through the action of CONSTANS (CO) and FLOWERING LOCUS T (FT).</text>
</comment>
<comment type="subunit">
    <text evidence="1 3">Interacts with UVR8.</text>
</comment>
<comment type="interaction">
    <interactant intactId="EBI-15889073">
        <id>Q9FFA7</id>
    </interactant>
    <interactant intactId="EBI-2407499">
        <id>Q9FN03</id>
        <label>UVR8</label>
    </interactant>
    <organismsDiffer>false</organismsDiffer>
    <experiments>3</experiments>
</comment>
<comment type="subcellular location">
    <subcellularLocation>
        <location evidence="1">Nucleus</location>
    </subcellularLocation>
    <subcellularLocation>
        <location evidence="1">Cytoplasm</location>
        <location evidence="1">Cytosol</location>
    </subcellularLocation>
</comment>
<comment type="induction">
    <text evidence="1 2">Circadian-regulation. Expression increases during the dark phase with a peak at the beginning of the light phase and then decreases to reach the lowest expression at the end of the light phase. Induced by UV-B.</text>
</comment>
<comment type="disruption phenotype">
    <text evidence="2">Small stunted leaves and early flowering under short days conditions.</text>
</comment>
<comment type="sequence caution" evidence="4">
    <conflict type="erroneous initiation">
        <sequence resource="EMBL-CDS" id="AAK64045"/>
    </conflict>
    <text>Truncated N-terminus.</text>
</comment>